<reference key="1">
    <citation type="journal article" date="2004" name="Nat. Biotechnol.">
        <title>The genome sequence of the capnophilic rumen bacterium Mannheimia succiniciproducens.</title>
        <authorList>
            <person name="Hong S.H."/>
            <person name="Kim J.S."/>
            <person name="Lee S.Y."/>
            <person name="In Y.H."/>
            <person name="Choi S.S."/>
            <person name="Rih J.-K."/>
            <person name="Kim C.H."/>
            <person name="Jeong H."/>
            <person name="Hur C.G."/>
            <person name="Kim J.J."/>
        </authorList>
    </citation>
    <scope>NUCLEOTIDE SEQUENCE [LARGE SCALE GENOMIC DNA]</scope>
    <source>
        <strain>KCTC 0769BP / MBEL55E</strain>
    </source>
</reference>
<gene>
    <name evidence="1" type="primary">thrB</name>
    <name type="ordered locus">MS1702</name>
</gene>
<protein>
    <recommendedName>
        <fullName evidence="1">Homoserine kinase</fullName>
        <shortName evidence="1">HK</shortName>
        <shortName evidence="1">HSK</shortName>
        <ecNumber evidence="1">2.7.1.39</ecNumber>
    </recommendedName>
</protein>
<organism>
    <name type="scientific">Mannheimia succiniciproducens (strain KCTC 0769BP / MBEL55E)</name>
    <dbReference type="NCBI Taxonomy" id="221988"/>
    <lineage>
        <taxon>Bacteria</taxon>
        <taxon>Pseudomonadati</taxon>
        <taxon>Pseudomonadota</taxon>
        <taxon>Gammaproteobacteria</taxon>
        <taxon>Pasteurellales</taxon>
        <taxon>Pasteurellaceae</taxon>
        <taxon>Basfia</taxon>
    </lineage>
</organism>
<comment type="function">
    <text evidence="1">Catalyzes the ATP-dependent phosphorylation of L-homoserine to L-homoserine phosphate.</text>
</comment>
<comment type="catalytic activity">
    <reaction evidence="1">
        <text>L-homoserine + ATP = O-phospho-L-homoserine + ADP + H(+)</text>
        <dbReference type="Rhea" id="RHEA:13985"/>
        <dbReference type="ChEBI" id="CHEBI:15378"/>
        <dbReference type="ChEBI" id="CHEBI:30616"/>
        <dbReference type="ChEBI" id="CHEBI:57476"/>
        <dbReference type="ChEBI" id="CHEBI:57590"/>
        <dbReference type="ChEBI" id="CHEBI:456216"/>
        <dbReference type="EC" id="2.7.1.39"/>
    </reaction>
</comment>
<comment type="pathway">
    <text evidence="1">Amino-acid biosynthesis; L-threonine biosynthesis; L-threonine from L-aspartate: step 4/5.</text>
</comment>
<comment type="subcellular location">
    <subcellularLocation>
        <location evidence="1">Cytoplasm</location>
    </subcellularLocation>
</comment>
<comment type="similarity">
    <text evidence="1">Belongs to the GHMP kinase family. Homoserine kinase subfamily.</text>
</comment>
<evidence type="ECO:0000255" key="1">
    <source>
        <dbReference type="HAMAP-Rule" id="MF_00384"/>
    </source>
</evidence>
<sequence>MLRIYAPASSANISVGFDTLGAAISPIDGSLLGDVVQIEDIPAGFELESAGYFVRKLPKEPQKNIVYQAYVLFSERLKLRNGHVKPLRLTLEKNMPIGSGLGSSACSIVAALVALNMFHNEPFSKMELLEMMGELEGRISGSIHYDNVAPCYLGGVQLMVQSLGNICQQLPFFDSWYWVLAYPGIEVSTAEARAILPKSYTRQDVIAHGRHLGSFVHACHTQQDVLAALMMKDVIAEPYRESLLPNFAEVKQASRDLGALATGISGSGPTIFSIAPDLAVATKLANYLENHYLQNNEGFVHICKVDNQGTRALG</sequence>
<proteinExistence type="inferred from homology"/>
<dbReference type="EC" id="2.7.1.39" evidence="1"/>
<dbReference type="EMBL" id="AE016827">
    <property type="protein sequence ID" value="AAU38309.1"/>
    <property type="molecule type" value="Genomic_DNA"/>
</dbReference>
<dbReference type="RefSeq" id="WP_011200870.1">
    <property type="nucleotide sequence ID" value="NC_006300.1"/>
</dbReference>
<dbReference type="SMR" id="Q65RV1"/>
<dbReference type="STRING" id="221988.MS1702"/>
<dbReference type="KEGG" id="msu:MS1702"/>
<dbReference type="eggNOG" id="COG0083">
    <property type="taxonomic scope" value="Bacteria"/>
</dbReference>
<dbReference type="HOGENOM" id="CLU_041243_1_1_6"/>
<dbReference type="OrthoDB" id="9769912at2"/>
<dbReference type="UniPathway" id="UPA00050">
    <property type="reaction ID" value="UER00064"/>
</dbReference>
<dbReference type="Proteomes" id="UP000000607">
    <property type="component" value="Chromosome"/>
</dbReference>
<dbReference type="GO" id="GO:0005737">
    <property type="term" value="C:cytoplasm"/>
    <property type="evidence" value="ECO:0007669"/>
    <property type="project" value="UniProtKB-SubCell"/>
</dbReference>
<dbReference type="GO" id="GO:0005524">
    <property type="term" value="F:ATP binding"/>
    <property type="evidence" value="ECO:0007669"/>
    <property type="project" value="UniProtKB-UniRule"/>
</dbReference>
<dbReference type="GO" id="GO:0004413">
    <property type="term" value="F:homoserine kinase activity"/>
    <property type="evidence" value="ECO:0007669"/>
    <property type="project" value="UniProtKB-UniRule"/>
</dbReference>
<dbReference type="GO" id="GO:0009088">
    <property type="term" value="P:threonine biosynthetic process"/>
    <property type="evidence" value="ECO:0007669"/>
    <property type="project" value="UniProtKB-UniRule"/>
</dbReference>
<dbReference type="Gene3D" id="3.30.230.10">
    <property type="match status" value="1"/>
</dbReference>
<dbReference type="Gene3D" id="3.30.70.890">
    <property type="entry name" value="GHMP kinase, C-terminal domain"/>
    <property type="match status" value="1"/>
</dbReference>
<dbReference type="HAMAP" id="MF_00384">
    <property type="entry name" value="Homoser_kinase"/>
    <property type="match status" value="1"/>
</dbReference>
<dbReference type="InterPro" id="IPR013750">
    <property type="entry name" value="GHMP_kinase_C_dom"/>
</dbReference>
<dbReference type="InterPro" id="IPR036554">
    <property type="entry name" value="GHMP_kinase_C_sf"/>
</dbReference>
<dbReference type="InterPro" id="IPR006204">
    <property type="entry name" value="GHMP_kinase_N_dom"/>
</dbReference>
<dbReference type="InterPro" id="IPR006203">
    <property type="entry name" value="GHMP_knse_ATP-bd_CS"/>
</dbReference>
<dbReference type="InterPro" id="IPR000870">
    <property type="entry name" value="Homoserine_kinase"/>
</dbReference>
<dbReference type="InterPro" id="IPR020568">
    <property type="entry name" value="Ribosomal_Su5_D2-typ_SF"/>
</dbReference>
<dbReference type="InterPro" id="IPR014721">
    <property type="entry name" value="Ribsml_uS5_D2-typ_fold_subgr"/>
</dbReference>
<dbReference type="NCBIfam" id="NF002288">
    <property type="entry name" value="PRK01212.1-4"/>
    <property type="match status" value="1"/>
</dbReference>
<dbReference type="NCBIfam" id="TIGR00191">
    <property type="entry name" value="thrB"/>
    <property type="match status" value="1"/>
</dbReference>
<dbReference type="PANTHER" id="PTHR20861:SF1">
    <property type="entry name" value="HOMOSERINE KINASE"/>
    <property type="match status" value="1"/>
</dbReference>
<dbReference type="PANTHER" id="PTHR20861">
    <property type="entry name" value="HOMOSERINE/4-DIPHOSPHOCYTIDYL-2-C-METHYL-D-ERYTHRITOL KINASE"/>
    <property type="match status" value="1"/>
</dbReference>
<dbReference type="Pfam" id="PF08544">
    <property type="entry name" value="GHMP_kinases_C"/>
    <property type="match status" value="1"/>
</dbReference>
<dbReference type="Pfam" id="PF00288">
    <property type="entry name" value="GHMP_kinases_N"/>
    <property type="match status" value="1"/>
</dbReference>
<dbReference type="PIRSF" id="PIRSF000676">
    <property type="entry name" value="Homoser_kin"/>
    <property type="match status" value="1"/>
</dbReference>
<dbReference type="PRINTS" id="PR00958">
    <property type="entry name" value="HOMSERKINASE"/>
</dbReference>
<dbReference type="SUPFAM" id="SSF55060">
    <property type="entry name" value="GHMP Kinase, C-terminal domain"/>
    <property type="match status" value="1"/>
</dbReference>
<dbReference type="SUPFAM" id="SSF54211">
    <property type="entry name" value="Ribosomal protein S5 domain 2-like"/>
    <property type="match status" value="1"/>
</dbReference>
<dbReference type="PROSITE" id="PS00627">
    <property type="entry name" value="GHMP_KINASES_ATP"/>
    <property type="match status" value="1"/>
</dbReference>
<accession>Q65RV1</accession>
<feature type="chain" id="PRO_0000156585" description="Homoserine kinase">
    <location>
        <begin position="1"/>
        <end position="314"/>
    </location>
</feature>
<feature type="binding site" evidence="1">
    <location>
        <begin position="96"/>
        <end position="106"/>
    </location>
    <ligand>
        <name>ATP</name>
        <dbReference type="ChEBI" id="CHEBI:30616"/>
    </ligand>
</feature>
<name>KHSE_MANSM</name>
<keyword id="KW-0028">Amino-acid biosynthesis</keyword>
<keyword id="KW-0067">ATP-binding</keyword>
<keyword id="KW-0963">Cytoplasm</keyword>
<keyword id="KW-0418">Kinase</keyword>
<keyword id="KW-0547">Nucleotide-binding</keyword>
<keyword id="KW-0791">Threonine biosynthesis</keyword>
<keyword id="KW-0808">Transferase</keyword>